<name>SAU71_ARATH</name>
<reference key="1">
    <citation type="journal article" date="2000" name="Nature">
        <title>Sequence and analysis of chromosome 1 of the plant Arabidopsis thaliana.</title>
        <authorList>
            <person name="Theologis A."/>
            <person name="Ecker J.R."/>
            <person name="Palm C.J."/>
            <person name="Federspiel N.A."/>
            <person name="Kaul S."/>
            <person name="White O."/>
            <person name="Alonso J."/>
            <person name="Altafi H."/>
            <person name="Araujo R."/>
            <person name="Bowman C.L."/>
            <person name="Brooks S.Y."/>
            <person name="Buehler E."/>
            <person name="Chan A."/>
            <person name="Chao Q."/>
            <person name="Chen H."/>
            <person name="Cheuk R.F."/>
            <person name="Chin C.W."/>
            <person name="Chung M.K."/>
            <person name="Conn L."/>
            <person name="Conway A.B."/>
            <person name="Conway A.R."/>
            <person name="Creasy T.H."/>
            <person name="Dewar K."/>
            <person name="Dunn P."/>
            <person name="Etgu P."/>
            <person name="Feldblyum T.V."/>
            <person name="Feng J.-D."/>
            <person name="Fong B."/>
            <person name="Fujii C.Y."/>
            <person name="Gill J.E."/>
            <person name="Goldsmith A.D."/>
            <person name="Haas B."/>
            <person name="Hansen N.F."/>
            <person name="Hughes B."/>
            <person name="Huizar L."/>
            <person name="Hunter J.L."/>
            <person name="Jenkins J."/>
            <person name="Johnson-Hopson C."/>
            <person name="Khan S."/>
            <person name="Khaykin E."/>
            <person name="Kim C.J."/>
            <person name="Koo H.L."/>
            <person name="Kremenetskaia I."/>
            <person name="Kurtz D.B."/>
            <person name="Kwan A."/>
            <person name="Lam B."/>
            <person name="Langin-Hooper S."/>
            <person name="Lee A."/>
            <person name="Lee J.M."/>
            <person name="Lenz C.A."/>
            <person name="Li J.H."/>
            <person name="Li Y.-P."/>
            <person name="Lin X."/>
            <person name="Liu S.X."/>
            <person name="Liu Z.A."/>
            <person name="Luros J.S."/>
            <person name="Maiti R."/>
            <person name="Marziali A."/>
            <person name="Militscher J."/>
            <person name="Miranda M."/>
            <person name="Nguyen M."/>
            <person name="Nierman W.C."/>
            <person name="Osborne B.I."/>
            <person name="Pai G."/>
            <person name="Peterson J."/>
            <person name="Pham P.K."/>
            <person name="Rizzo M."/>
            <person name="Rooney T."/>
            <person name="Rowley D."/>
            <person name="Sakano H."/>
            <person name="Salzberg S.L."/>
            <person name="Schwartz J.R."/>
            <person name="Shinn P."/>
            <person name="Southwick A.M."/>
            <person name="Sun H."/>
            <person name="Tallon L.J."/>
            <person name="Tambunga G."/>
            <person name="Toriumi M.J."/>
            <person name="Town C.D."/>
            <person name="Utterback T."/>
            <person name="Van Aken S."/>
            <person name="Vaysberg M."/>
            <person name="Vysotskaia V.S."/>
            <person name="Walker M."/>
            <person name="Wu D."/>
            <person name="Yu G."/>
            <person name="Fraser C.M."/>
            <person name="Venter J.C."/>
            <person name="Davis R.W."/>
        </authorList>
    </citation>
    <scope>NUCLEOTIDE SEQUENCE [LARGE SCALE GENOMIC DNA]</scope>
    <source>
        <strain>cv. Columbia</strain>
    </source>
</reference>
<reference key="2">
    <citation type="journal article" date="2017" name="Plant J.">
        <title>Araport11: a complete reannotation of the Arabidopsis thaliana reference genome.</title>
        <authorList>
            <person name="Cheng C.Y."/>
            <person name="Krishnakumar V."/>
            <person name="Chan A.P."/>
            <person name="Thibaud-Nissen F."/>
            <person name="Schobel S."/>
            <person name="Town C.D."/>
        </authorList>
    </citation>
    <scope>GENOME REANNOTATION</scope>
    <source>
        <strain>cv. Columbia</strain>
    </source>
</reference>
<reference key="3">
    <citation type="journal article" date="2002" name="Science">
        <title>Functional annotation of a full-length Arabidopsis cDNA collection.</title>
        <authorList>
            <person name="Seki M."/>
            <person name="Narusaka M."/>
            <person name="Kamiya A."/>
            <person name="Ishida J."/>
            <person name="Satou M."/>
            <person name="Sakurai T."/>
            <person name="Nakajima M."/>
            <person name="Enju A."/>
            <person name="Akiyama K."/>
            <person name="Oono Y."/>
            <person name="Muramatsu M."/>
            <person name="Hayashizaki Y."/>
            <person name="Kawai J."/>
            <person name="Carninci P."/>
            <person name="Itoh M."/>
            <person name="Ishii Y."/>
            <person name="Arakawa T."/>
            <person name="Shibata K."/>
            <person name="Shinagawa A."/>
            <person name="Shinozaki K."/>
        </authorList>
    </citation>
    <scope>NUCLEOTIDE SEQUENCE [LARGE SCALE MRNA]</scope>
    <source>
        <strain>cv. Columbia</strain>
    </source>
</reference>
<reference key="4">
    <citation type="journal article" date="2003" name="Science">
        <title>Empirical analysis of transcriptional activity in the Arabidopsis genome.</title>
        <authorList>
            <person name="Yamada K."/>
            <person name="Lim J."/>
            <person name="Dale J.M."/>
            <person name="Chen H."/>
            <person name="Shinn P."/>
            <person name="Palm C.J."/>
            <person name="Southwick A.M."/>
            <person name="Wu H.C."/>
            <person name="Kim C.J."/>
            <person name="Nguyen M."/>
            <person name="Pham P.K."/>
            <person name="Cheuk R.F."/>
            <person name="Karlin-Newmann G."/>
            <person name="Liu S.X."/>
            <person name="Lam B."/>
            <person name="Sakano H."/>
            <person name="Wu T."/>
            <person name="Yu G."/>
            <person name="Miranda M."/>
            <person name="Quach H.L."/>
            <person name="Tripp M."/>
            <person name="Chang C.H."/>
            <person name="Lee J.M."/>
            <person name="Toriumi M.J."/>
            <person name="Chan M.M."/>
            <person name="Tang C.C."/>
            <person name="Onodera C.S."/>
            <person name="Deng J.M."/>
            <person name="Akiyama K."/>
            <person name="Ansari Y."/>
            <person name="Arakawa T."/>
            <person name="Banh J."/>
            <person name="Banno F."/>
            <person name="Bowser L."/>
            <person name="Brooks S.Y."/>
            <person name="Carninci P."/>
            <person name="Chao Q."/>
            <person name="Choy N."/>
            <person name="Enju A."/>
            <person name="Goldsmith A.D."/>
            <person name="Gurjal M."/>
            <person name="Hansen N.F."/>
            <person name="Hayashizaki Y."/>
            <person name="Johnson-Hopson C."/>
            <person name="Hsuan V.W."/>
            <person name="Iida K."/>
            <person name="Karnes M."/>
            <person name="Khan S."/>
            <person name="Koesema E."/>
            <person name="Ishida J."/>
            <person name="Jiang P.X."/>
            <person name="Jones T."/>
            <person name="Kawai J."/>
            <person name="Kamiya A."/>
            <person name="Meyers C."/>
            <person name="Nakajima M."/>
            <person name="Narusaka M."/>
            <person name="Seki M."/>
            <person name="Sakurai T."/>
            <person name="Satou M."/>
            <person name="Tamse R."/>
            <person name="Vaysberg M."/>
            <person name="Wallender E.K."/>
            <person name="Wong C."/>
            <person name="Yamamura Y."/>
            <person name="Yuan S."/>
            <person name="Shinozaki K."/>
            <person name="Davis R.W."/>
            <person name="Theologis A."/>
            <person name="Ecker J.R."/>
        </authorList>
    </citation>
    <scope>NUCLEOTIDE SEQUENCE [LARGE SCALE MRNA]</scope>
    <source>
        <strain>cv. Columbia</strain>
    </source>
</reference>
<reference key="5">
    <citation type="journal article" date="2002" name="Plant Mol. Biol.">
        <title>Auxin-responsive gene expression: genes, promoters and regulatory factors.</title>
        <authorList>
            <person name="Hagen G."/>
            <person name="Guilfoyle T.J."/>
        </authorList>
    </citation>
    <scope>GENE FAMILY</scope>
    <scope>NOMENCLATURE</scope>
</reference>
<reference key="6">
    <citation type="journal article" date="2013" name="Plant Signal. Behav.">
        <title>The tissue-specific and developmentally regulated expression patterns of the SAUR41 subfamily of small auxin up RNA genes: potential implications.</title>
        <authorList>
            <person name="Qiu T."/>
            <person name="Chen Y."/>
            <person name="Li M."/>
            <person name="Kong Y."/>
            <person name="Zhu Y."/>
            <person name="Han N."/>
            <person name="Bian H."/>
            <person name="Zhu M."/>
            <person name="Wang J."/>
        </authorList>
    </citation>
    <scope>SUBCELLULAR LOCATION</scope>
    <scope>TISSUE SPECIFICITY</scope>
    <scope>DEVELOPMENTAL STAGE</scope>
</reference>
<gene>
    <name evidence="3" type="primary">SAUR71</name>
    <name evidence="5" type="ordered locus">At1g56150</name>
    <name evidence="7" type="ORF">F14G9.23</name>
    <name evidence="6" type="ORF">T6H22.5</name>
</gene>
<keyword id="KW-0927">Auxin signaling pathway</keyword>
<keyword id="KW-0963">Cytoplasm</keyword>
<keyword id="KW-0217">Developmental protein</keyword>
<keyword id="KW-0341">Growth regulation</keyword>
<keyword id="KW-1185">Reference proteome</keyword>
<sequence length="110" mass="12782">MKQLIRRLSRVADSTQYSLLRSESQRGRTKKEKHKSWVPEGHVPVYVGHEMERFVVNAELLNHPVFVALLKQSAQEYGYEQQGVLRIPCHVLVFERILESLRLGLADRVT</sequence>
<proteinExistence type="evidence at transcript level"/>
<protein>
    <recommendedName>
        <fullName evidence="4">Auxin-responsive protein SAUR71</fullName>
    </recommendedName>
    <alternativeName>
        <fullName evidence="3">Protein SMALL AUXIN UP RNA 71</fullName>
    </alternativeName>
</protein>
<dbReference type="EMBL" id="AC009894">
    <property type="protein sequence ID" value="AAF02834.1"/>
    <property type="molecule type" value="Genomic_DNA"/>
</dbReference>
<dbReference type="EMBL" id="AC069159">
    <property type="protein sequence ID" value="AAG50906.1"/>
    <property type="molecule type" value="Genomic_DNA"/>
</dbReference>
<dbReference type="EMBL" id="CP002684">
    <property type="protein sequence ID" value="AEE33351.1"/>
    <property type="molecule type" value="Genomic_DNA"/>
</dbReference>
<dbReference type="EMBL" id="AK117796">
    <property type="protein sequence ID" value="BAC42441.1"/>
    <property type="molecule type" value="mRNA"/>
</dbReference>
<dbReference type="EMBL" id="BT004698">
    <property type="protein sequence ID" value="AAO42944.1"/>
    <property type="molecule type" value="mRNA"/>
</dbReference>
<dbReference type="PIR" id="H96602">
    <property type="entry name" value="H96602"/>
</dbReference>
<dbReference type="RefSeq" id="NP_176011.1">
    <property type="nucleotide sequence ID" value="NM_104494.3"/>
</dbReference>
<dbReference type="SMR" id="Q9SGU2"/>
<dbReference type="FunCoup" id="Q9SGU2">
    <property type="interactions" value="289"/>
</dbReference>
<dbReference type="IntAct" id="Q9SGU2">
    <property type="interactions" value="3"/>
</dbReference>
<dbReference type="STRING" id="3702.Q9SGU2"/>
<dbReference type="iPTMnet" id="Q9SGU2"/>
<dbReference type="PaxDb" id="3702-AT1G56150.1"/>
<dbReference type="EnsemblPlants" id="AT1G56150.1">
    <property type="protein sequence ID" value="AT1G56150.1"/>
    <property type="gene ID" value="AT1G56150"/>
</dbReference>
<dbReference type="GeneID" id="842068"/>
<dbReference type="Gramene" id="AT1G56150.1">
    <property type="protein sequence ID" value="AT1G56150.1"/>
    <property type="gene ID" value="AT1G56150"/>
</dbReference>
<dbReference type="KEGG" id="ath:AT1G56150"/>
<dbReference type="Araport" id="AT1G56150"/>
<dbReference type="TAIR" id="AT1G56150">
    <property type="gene designation" value="SAUR71"/>
</dbReference>
<dbReference type="eggNOG" id="ENOG502S1QJ">
    <property type="taxonomic scope" value="Eukaryota"/>
</dbReference>
<dbReference type="HOGENOM" id="CLU_098106_7_1_1"/>
<dbReference type="InParanoid" id="Q9SGU2"/>
<dbReference type="OMA" id="CQARRVH"/>
<dbReference type="OrthoDB" id="838391at2759"/>
<dbReference type="PhylomeDB" id="Q9SGU2"/>
<dbReference type="PRO" id="PR:Q9SGU2"/>
<dbReference type="Proteomes" id="UP000006548">
    <property type="component" value="Chromosome 1"/>
</dbReference>
<dbReference type="ExpressionAtlas" id="Q9SGU2">
    <property type="expression patterns" value="baseline and differential"/>
</dbReference>
<dbReference type="GO" id="GO:0005737">
    <property type="term" value="C:cytoplasm"/>
    <property type="evidence" value="ECO:0000314"/>
    <property type="project" value="UniProtKB"/>
</dbReference>
<dbReference type="GO" id="GO:0009734">
    <property type="term" value="P:auxin-activated signaling pathway"/>
    <property type="evidence" value="ECO:0007669"/>
    <property type="project" value="UniProtKB-KW"/>
</dbReference>
<dbReference type="InterPro" id="IPR003676">
    <property type="entry name" value="SAUR_fam"/>
</dbReference>
<dbReference type="PANTHER" id="PTHR31374">
    <property type="entry name" value="AUXIN-INDUCED PROTEIN-LIKE-RELATED"/>
    <property type="match status" value="1"/>
</dbReference>
<dbReference type="PANTHER" id="PTHR31374:SF421">
    <property type="entry name" value="AUXIN-RESPONSIVE PROTEIN SAUR71"/>
    <property type="match status" value="1"/>
</dbReference>
<dbReference type="Pfam" id="PF02519">
    <property type="entry name" value="Auxin_inducible"/>
    <property type="match status" value="1"/>
</dbReference>
<feature type="chain" id="PRO_0000433071" description="Auxin-responsive protein SAUR71">
    <location>
        <begin position="1"/>
        <end position="110"/>
    </location>
</feature>
<evidence type="ECO:0000250" key="1">
    <source>
        <dbReference type="UniProtKB" id="Q9SA49"/>
    </source>
</evidence>
<evidence type="ECO:0000269" key="2">
    <source>
    </source>
</evidence>
<evidence type="ECO:0000303" key="3">
    <source>
    </source>
</evidence>
<evidence type="ECO:0000305" key="4"/>
<evidence type="ECO:0000312" key="5">
    <source>
        <dbReference type="Araport" id="AT1G56150"/>
    </source>
</evidence>
<evidence type="ECO:0000312" key="6">
    <source>
        <dbReference type="EMBL" id="AAF02834.1"/>
    </source>
</evidence>
<evidence type="ECO:0000312" key="7">
    <source>
        <dbReference type="EMBL" id="AAG50906.1"/>
    </source>
</evidence>
<comment type="function">
    <text evidence="1">Plays a role in the regulation of cell expansion, root meristem patterning and auxin transport.</text>
</comment>
<comment type="subcellular location">
    <subcellularLocation>
        <location evidence="2">Cytoplasm</location>
    </subcellularLocation>
</comment>
<comment type="tissue specificity">
    <text evidence="2">Highly expressed in the steles of roots and hypocotyls.</text>
</comment>
<comment type="developmental stage">
    <text evidence="2">Extensively expressed in guard mother cells and young guard cells of cotyledons and leaves during stomatal formation.</text>
</comment>
<comment type="similarity">
    <text evidence="4">Belongs to the ARG7 family.</text>
</comment>
<accession>Q9SGU2</accession>
<organism>
    <name type="scientific">Arabidopsis thaliana</name>
    <name type="common">Mouse-ear cress</name>
    <dbReference type="NCBI Taxonomy" id="3702"/>
    <lineage>
        <taxon>Eukaryota</taxon>
        <taxon>Viridiplantae</taxon>
        <taxon>Streptophyta</taxon>
        <taxon>Embryophyta</taxon>
        <taxon>Tracheophyta</taxon>
        <taxon>Spermatophyta</taxon>
        <taxon>Magnoliopsida</taxon>
        <taxon>eudicotyledons</taxon>
        <taxon>Gunneridae</taxon>
        <taxon>Pentapetalae</taxon>
        <taxon>rosids</taxon>
        <taxon>malvids</taxon>
        <taxon>Brassicales</taxon>
        <taxon>Brassicaceae</taxon>
        <taxon>Camelineae</taxon>
        <taxon>Arabidopsis</taxon>
    </lineage>
</organism>